<name>RPOF_KITAU</name>
<sequence length="297" mass="33381">MTVPASTAPQVPPQQDPQVPHPQEPREEPHEEPPSPPAAPRPQSRGADTRALTQVLFGQLKGLQPGTREHERVRGALIEANLPLVRYAAARFRSRNEPMEDVVQVGTIGLINAIDRFDPERGVQFPTFAMPTVVGEIKRYFRDNVRTVHVPRRLHELWVQVNAATEDLTTLHGRTPTTPEIAERLRISEDEVLSCIEAGRSYHATSLEAAQEGDGMPGLLDRLGYEDPELAGVEHRDLVRHLLVQLPEREQRILLLRYYNNLTQSQISAELGVSQMHVSRLLARSFARLRSANRIEA</sequence>
<gene>
    <name type="primary">sigF</name>
    <name type="synonym">rpoX</name>
</gene>
<accession>P37970</accession>
<organism>
    <name type="scientific">Kitasatospora aureofaciens</name>
    <name type="common">Streptomyces aureofaciens</name>
    <dbReference type="NCBI Taxonomy" id="1894"/>
    <lineage>
        <taxon>Bacteria</taxon>
        <taxon>Bacillati</taxon>
        <taxon>Actinomycetota</taxon>
        <taxon>Actinomycetes</taxon>
        <taxon>Kitasatosporales</taxon>
        <taxon>Streptomycetaceae</taxon>
        <taxon>Kitasatospora</taxon>
    </lineage>
</organism>
<reference key="1">
    <citation type="journal article" date="1995" name="Mol. Microbiol.">
        <title>A new RNA polymerase sigma factor, sigma F, is required for the late stages of morphological differentiation in Streptomyces spp.</title>
        <authorList>
            <person name="Potuckova L."/>
            <person name="Kelemen G.H."/>
            <person name="Findlay K.C."/>
            <person name="Lonetto M.A."/>
            <person name="Buttner M.J."/>
            <person name="Kormanec J."/>
        </authorList>
    </citation>
    <scope>NUCLEOTIDE SEQUENCE [GENOMIC DNA]</scope>
</reference>
<protein>
    <recommendedName>
        <fullName>RNA polymerase sigma-F factor</fullName>
    </recommendedName>
</protein>
<feature type="chain" id="PRO_0000093979" description="RNA polymerase sigma-F factor">
    <location>
        <begin position="1"/>
        <end position="297"/>
    </location>
</feature>
<feature type="DNA-binding region" description="H-T-H motif" evidence="1">
    <location>
        <begin position="264"/>
        <end position="283"/>
    </location>
</feature>
<feature type="region of interest" description="Disordered" evidence="2">
    <location>
        <begin position="1"/>
        <end position="46"/>
    </location>
</feature>
<feature type="short sequence motif" description="Polymerase core binding">
    <location>
        <begin position="101"/>
        <end position="114"/>
    </location>
</feature>
<feature type="compositionally biased region" description="Pro residues" evidence="2">
    <location>
        <begin position="10"/>
        <end position="22"/>
    </location>
</feature>
<feature type="compositionally biased region" description="Basic and acidic residues" evidence="2">
    <location>
        <begin position="23"/>
        <end position="33"/>
    </location>
</feature>
<keyword id="KW-0238">DNA-binding</keyword>
<keyword id="KW-0731">Sigma factor</keyword>
<keyword id="KW-0804">Transcription</keyword>
<keyword id="KW-0805">Transcription regulation</keyword>
<dbReference type="EMBL" id="L09565">
    <property type="protein sequence ID" value="AAA93050.1"/>
    <property type="molecule type" value="Genomic_DNA"/>
</dbReference>
<dbReference type="SMR" id="P37970"/>
<dbReference type="STRING" id="1894.ADK78_36830"/>
<dbReference type="GO" id="GO:0003677">
    <property type="term" value="F:DNA binding"/>
    <property type="evidence" value="ECO:0007669"/>
    <property type="project" value="UniProtKB-KW"/>
</dbReference>
<dbReference type="GO" id="GO:0016987">
    <property type="term" value="F:sigma factor activity"/>
    <property type="evidence" value="ECO:0007669"/>
    <property type="project" value="UniProtKB-KW"/>
</dbReference>
<dbReference type="GO" id="GO:0006352">
    <property type="term" value="P:DNA-templated transcription initiation"/>
    <property type="evidence" value="ECO:0007669"/>
    <property type="project" value="InterPro"/>
</dbReference>
<dbReference type="CDD" id="cd06171">
    <property type="entry name" value="Sigma70_r4"/>
    <property type="match status" value="1"/>
</dbReference>
<dbReference type="Gene3D" id="1.20.120.1810">
    <property type="match status" value="1"/>
</dbReference>
<dbReference type="Gene3D" id="1.10.10.10">
    <property type="entry name" value="Winged helix-like DNA-binding domain superfamily/Winged helix DNA-binding domain"/>
    <property type="match status" value="2"/>
</dbReference>
<dbReference type="InterPro" id="IPR014284">
    <property type="entry name" value="RNA_pol_sigma-70_dom"/>
</dbReference>
<dbReference type="InterPro" id="IPR014322">
    <property type="entry name" value="RNA_pol_sigma-B/F/G"/>
</dbReference>
<dbReference type="InterPro" id="IPR000943">
    <property type="entry name" value="RNA_pol_sigma70"/>
</dbReference>
<dbReference type="InterPro" id="IPR007627">
    <property type="entry name" value="RNA_pol_sigma70_r2"/>
</dbReference>
<dbReference type="InterPro" id="IPR007624">
    <property type="entry name" value="RNA_pol_sigma70_r3"/>
</dbReference>
<dbReference type="InterPro" id="IPR007630">
    <property type="entry name" value="RNA_pol_sigma70_r4"/>
</dbReference>
<dbReference type="InterPro" id="IPR013325">
    <property type="entry name" value="RNA_pol_sigma_r2"/>
</dbReference>
<dbReference type="InterPro" id="IPR013324">
    <property type="entry name" value="RNA_pol_sigma_r3/r4-like"/>
</dbReference>
<dbReference type="InterPro" id="IPR036388">
    <property type="entry name" value="WH-like_DNA-bd_sf"/>
</dbReference>
<dbReference type="NCBIfam" id="TIGR02980">
    <property type="entry name" value="SigBFG"/>
    <property type="match status" value="1"/>
</dbReference>
<dbReference type="NCBIfam" id="TIGR02937">
    <property type="entry name" value="sigma70-ECF"/>
    <property type="match status" value="1"/>
</dbReference>
<dbReference type="PANTHER" id="PTHR30385:SF4">
    <property type="entry name" value="RNA POLYMERASE SIGMA-E FACTOR"/>
    <property type="match status" value="1"/>
</dbReference>
<dbReference type="PANTHER" id="PTHR30385">
    <property type="entry name" value="SIGMA FACTOR F FLAGELLAR"/>
    <property type="match status" value="1"/>
</dbReference>
<dbReference type="Pfam" id="PF04542">
    <property type="entry name" value="Sigma70_r2"/>
    <property type="match status" value="1"/>
</dbReference>
<dbReference type="Pfam" id="PF04539">
    <property type="entry name" value="Sigma70_r3"/>
    <property type="match status" value="1"/>
</dbReference>
<dbReference type="Pfam" id="PF04545">
    <property type="entry name" value="Sigma70_r4"/>
    <property type="match status" value="1"/>
</dbReference>
<dbReference type="PRINTS" id="PR00046">
    <property type="entry name" value="SIGMA70FCT"/>
</dbReference>
<dbReference type="SUPFAM" id="SSF88946">
    <property type="entry name" value="Sigma2 domain of RNA polymerase sigma factors"/>
    <property type="match status" value="1"/>
</dbReference>
<dbReference type="SUPFAM" id="SSF88659">
    <property type="entry name" value="Sigma3 and sigma4 domains of RNA polymerase sigma factors"/>
    <property type="match status" value="2"/>
</dbReference>
<dbReference type="PROSITE" id="PS00715">
    <property type="entry name" value="SIGMA70_1"/>
    <property type="match status" value="1"/>
</dbReference>
<evidence type="ECO:0000250" key="1"/>
<evidence type="ECO:0000256" key="2">
    <source>
        <dbReference type="SAM" id="MobiDB-lite"/>
    </source>
</evidence>
<evidence type="ECO:0000305" key="3"/>
<comment type="function">
    <text>Sigma factors are initiation factors that promote the attachment of RNA polymerase to specific initiation sites and are then released. This sigma factor is required for normal spore maturation.</text>
</comment>
<comment type="similarity">
    <text evidence="3">Belongs to the sigma-70 factor family. SigB subfamily.</text>
</comment>
<proteinExistence type="inferred from homology"/>